<accession>P07489</accession>
<organism>
    <name type="scientific">Oryctolagus cuniculus</name>
    <name type="common">Rabbit</name>
    <dbReference type="NCBI Taxonomy" id="9986"/>
    <lineage>
        <taxon>Eukaryota</taxon>
        <taxon>Metazoa</taxon>
        <taxon>Chordata</taxon>
        <taxon>Craniata</taxon>
        <taxon>Vertebrata</taxon>
        <taxon>Euteleostomi</taxon>
        <taxon>Mammalia</taxon>
        <taxon>Eutheria</taxon>
        <taxon>Euarchontoglires</taxon>
        <taxon>Glires</taxon>
        <taxon>Lagomorpha</taxon>
        <taxon>Leporidae</taxon>
        <taxon>Oryctolagus</taxon>
    </lineage>
</organism>
<dbReference type="PIR" id="B22621">
    <property type="entry name" value="VBRB"/>
</dbReference>
<dbReference type="SMR" id="P07489"/>
<dbReference type="FunCoup" id="P07489">
    <property type="interactions" value="14"/>
</dbReference>
<dbReference type="STRING" id="9986.ENSOCUP00000014907"/>
<dbReference type="GlyCosmos" id="P07489">
    <property type="glycosylation" value="1 site, No reported glycans"/>
</dbReference>
<dbReference type="PaxDb" id="9986-ENSOCUP00000014907"/>
<dbReference type="eggNOG" id="KOG3006">
    <property type="taxonomic scope" value="Eukaryota"/>
</dbReference>
<dbReference type="InParanoid" id="P07489"/>
<dbReference type="Proteomes" id="UP000001811">
    <property type="component" value="Unplaced"/>
</dbReference>
<dbReference type="GO" id="GO:0005615">
    <property type="term" value="C:extracellular space"/>
    <property type="evidence" value="ECO:0007669"/>
    <property type="project" value="TreeGrafter"/>
</dbReference>
<dbReference type="GO" id="GO:0005179">
    <property type="term" value="F:hormone activity"/>
    <property type="evidence" value="ECO:0007669"/>
    <property type="project" value="UniProtKB-KW"/>
</dbReference>
<dbReference type="GO" id="GO:0070324">
    <property type="term" value="F:thyroid hormone binding"/>
    <property type="evidence" value="ECO:0007669"/>
    <property type="project" value="TreeGrafter"/>
</dbReference>
<dbReference type="GO" id="GO:0006144">
    <property type="term" value="P:purine nucleobase metabolic process"/>
    <property type="evidence" value="ECO:0007669"/>
    <property type="project" value="TreeGrafter"/>
</dbReference>
<dbReference type="CDD" id="cd05821">
    <property type="entry name" value="TLP_Transthyretin"/>
    <property type="match status" value="1"/>
</dbReference>
<dbReference type="FunFam" id="2.60.40.180:FF:000002">
    <property type="entry name" value="Transthyretin"/>
    <property type="match status" value="1"/>
</dbReference>
<dbReference type="Gene3D" id="2.60.40.180">
    <property type="entry name" value="Transthyretin/hydroxyisourate hydrolase domain"/>
    <property type="match status" value="1"/>
</dbReference>
<dbReference type="InterPro" id="IPR023418">
    <property type="entry name" value="Thyroxine_BS"/>
</dbReference>
<dbReference type="InterPro" id="IPR000895">
    <property type="entry name" value="Transthyretin/HIU_hydrolase"/>
</dbReference>
<dbReference type="InterPro" id="IPR023416">
    <property type="entry name" value="Transthyretin/HIU_hydrolase_d"/>
</dbReference>
<dbReference type="InterPro" id="IPR036817">
    <property type="entry name" value="Transthyretin/HIU_hydrolase_sf"/>
</dbReference>
<dbReference type="InterPro" id="IPR023419">
    <property type="entry name" value="Transthyretin_CS"/>
</dbReference>
<dbReference type="PANTHER" id="PTHR10395:SF12">
    <property type="entry name" value="TRANSTHYRETIN"/>
    <property type="match status" value="1"/>
</dbReference>
<dbReference type="PANTHER" id="PTHR10395">
    <property type="entry name" value="URICASE AND TRANSTHYRETIN-RELATED"/>
    <property type="match status" value="1"/>
</dbReference>
<dbReference type="Pfam" id="PF00576">
    <property type="entry name" value="Transthyretin"/>
    <property type="match status" value="1"/>
</dbReference>
<dbReference type="PRINTS" id="PR00189">
    <property type="entry name" value="TRNSTHYRETIN"/>
</dbReference>
<dbReference type="SMART" id="SM00095">
    <property type="entry name" value="TR_THY"/>
    <property type="match status" value="1"/>
</dbReference>
<dbReference type="SUPFAM" id="SSF49472">
    <property type="entry name" value="Transthyretin (synonym: prealbumin)"/>
    <property type="match status" value="1"/>
</dbReference>
<dbReference type="PROSITE" id="PS00768">
    <property type="entry name" value="TRANSTHYRETIN_1"/>
    <property type="match status" value="1"/>
</dbReference>
<dbReference type="PROSITE" id="PS00769">
    <property type="entry name" value="TRANSTHYRETIN_2"/>
    <property type="match status" value="1"/>
</dbReference>
<gene>
    <name type="primary">TTR</name>
</gene>
<comment type="function">
    <text evidence="1">Thyroid hormone-binding protein. Probably transports thyroxine from the bloodstream to the brain (By similarity).</text>
</comment>
<comment type="subunit">
    <text evidence="1">Homotetramer. Dimer of dimers. In the homotetramer, subunits assemble around a central channel that can accommodate two ligand molecules. Interacts with RBP4 (By similarity).</text>
</comment>
<comment type="subcellular location">
    <subcellularLocation>
        <location evidence="4">Secreted</location>
    </subcellularLocation>
</comment>
<comment type="tissue specificity">
    <text evidence="4">Detected in serum (at protein level).</text>
</comment>
<comment type="PTM">
    <text evidence="2">Sulfonation of the reactive cysteine Cys-10 enhances the stability of the native conformation of TTR, avoiding misassembly of the protein leading to amyloid formation.</text>
</comment>
<comment type="similarity">
    <text evidence="5">Belongs to the transthyretin family.</text>
</comment>
<reference key="1">
    <citation type="journal article" date="1985" name="J. Biol. Chem.">
        <title>The primary structure of rabbit and rat prealbumin and a comparison with the tertiary structure of human prealbumin.</title>
        <authorList>
            <person name="Sundelin J."/>
            <person name="Melhus H."/>
            <person name="Das S."/>
            <person name="Eriksson U."/>
            <person name="Lind P."/>
            <person name="Traegaardh L."/>
            <person name="Peterson P.A."/>
            <person name="Rask L."/>
        </authorList>
    </citation>
    <scope>PROTEIN SEQUENCE</scope>
    <scope>SUBCELLULAR LOCATION</scope>
    <scope>TISSUE SPECIFICITY</scope>
</reference>
<protein>
    <recommendedName>
        <fullName>Transthyretin</fullName>
    </recommendedName>
    <alternativeName>
        <fullName>Prealbumin</fullName>
    </alternativeName>
</protein>
<proteinExistence type="evidence at protein level"/>
<sequence length="127" mass="13657">GPVGTGDSKCPLMVKVLDAVRGSPAVDVSVHVFKKAADETWEPFASGKTSKTGELHGLTTSEKFVEGVYKVELDTKSYWKALGISPFHEYAEVVFTANDSGHRSYTIAALLSPFSYSTTAVVSNPQE</sequence>
<name>TTHY_RABIT</name>
<feature type="chain" id="PRO_0000050602" description="Transthyretin">
    <location>
        <begin position="1"/>
        <end position="127"/>
    </location>
</feature>
<feature type="binding site" evidence="2">
    <location>
        <position position="15"/>
    </location>
    <ligand>
        <name>L-thyroxine</name>
        <dbReference type="ChEBI" id="CHEBI:58448"/>
    </ligand>
</feature>
<feature type="binding site" evidence="2">
    <location>
        <position position="54"/>
    </location>
    <ligand>
        <name>L-thyroxine</name>
        <dbReference type="ChEBI" id="CHEBI:58448"/>
    </ligand>
</feature>
<feature type="binding site" evidence="2">
    <location>
        <position position="117"/>
    </location>
    <ligand>
        <name>L-thyroxine</name>
        <dbReference type="ChEBI" id="CHEBI:58448"/>
    </ligand>
</feature>
<feature type="modified residue" description="Sulfocysteine" evidence="2">
    <location>
        <position position="10"/>
    </location>
</feature>
<feature type="modified residue" description="4-carboxyglutamate" evidence="2">
    <location>
        <position position="42"/>
    </location>
</feature>
<feature type="glycosylation site" description="N-linked (GlcNAc...) asparagine" evidence="3">
    <location>
        <position position="98"/>
    </location>
</feature>
<keyword id="KW-0903">Direct protein sequencing</keyword>
<keyword id="KW-0301">Gamma-carboxyglutamic acid</keyword>
<keyword id="KW-0325">Glycoprotein</keyword>
<keyword id="KW-0372">Hormone</keyword>
<keyword id="KW-1185">Reference proteome</keyword>
<keyword id="KW-0964">Secreted</keyword>
<keyword id="KW-0765">Sulfation</keyword>
<keyword id="KW-0795">Thyroid hormone</keyword>
<keyword id="KW-0813">Transport</keyword>
<evidence type="ECO:0000250" key="1"/>
<evidence type="ECO:0000250" key="2">
    <source>
        <dbReference type="UniProtKB" id="P02766"/>
    </source>
</evidence>
<evidence type="ECO:0000255" key="3"/>
<evidence type="ECO:0000269" key="4">
    <source>
    </source>
</evidence>
<evidence type="ECO:0000305" key="5"/>